<name>Y477_LACJO</name>
<evidence type="ECO:0000255" key="1">
    <source>
        <dbReference type="HAMAP-Rule" id="MF_01448"/>
    </source>
</evidence>
<accession>Q74KV0</accession>
<comment type="similarity">
    <text evidence="1">Belongs to the UPF0473 family.</text>
</comment>
<protein>
    <recommendedName>
        <fullName evidence="1">UPF0473 protein LJ_0477</fullName>
    </recommendedName>
</protein>
<dbReference type="EMBL" id="AE017198">
    <property type="protein sequence ID" value="AAS08469.1"/>
    <property type="molecule type" value="Genomic_DNA"/>
</dbReference>
<dbReference type="RefSeq" id="WP_004895671.1">
    <property type="nucleotide sequence ID" value="NC_005362.1"/>
</dbReference>
<dbReference type="KEGG" id="ljo:LJ_0477"/>
<dbReference type="eggNOG" id="COG3906">
    <property type="taxonomic scope" value="Bacteria"/>
</dbReference>
<dbReference type="HOGENOM" id="CLU_146610_2_1_9"/>
<dbReference type="Proteomes" id="UP000000581">
    <property type="component" value="Chromosome"/>
</dbReference>
<dbReference type="HAMAP" id="MF_01448">
    <property type="entry name" value="UPF0473"/>
    <property type="match status" value="1"/>
</dbReference>
<dbReference type="InterPro" id="IPR018247">
    <property type="entry name" value="EF_Hand_1_Ca_BS"/>
</dbReference>
<dbReference type="InterPro" id="IPR009711">
    <property type="entry name" value="UPF0473"/>
</dbReference>
<dbReference type="NCBIfam" id="NF010217">
    <property type="entry name" value="PRK13678.1-4"/>
    <property type="match status" value="1"/>
</dbReference>
<dbReference type="PANTHER" id="PTHR40066">
    <property type="entry name" value="UPF0473 PROTEIN CBO2561/CLC_2432"/>
    <property type="match status" value="1"/>
</dbReference>
<dbReference type="PANTHER" id="PTHR40066:SF1">
    <property type="entry name" value="UPF0473 PROTEIN CBO2561_CLC_2432"/>
    <property type="match status" value="1"/>
</dbReference>
<dbReference type="Pfam" id="PF06949">
    <property type="entry name" value="DUF1292"/>
    <property type="match status" value="1"/>
</dbReference>
<organism>
    <name type="scientific">Lactobacillus johnsonii (strain CNCM I-12250 / La1 / NCC 533)</name>
    <dbReference type="NCBI Taxonomy" id="257314"/>
    <lineage>
        <taxon>Bacteria</taxon>
        <taxon>Bacillati</taxon>
        <taxon>Bacillota</taxon>
        <taxon>Bacilli</taxon>
        <taxon>Lactobacillales</taxon>
        <taxon>Lactobacillaceae</taxon>
        <taxon>Lactobacillus</taxon>
    </lineage>
</organism>
<gene>
    <name type="ordered locus">LJ_0477</name>
</gene>
<reference key="1">
    <citation type="journal article" date="2004" name="Proc. Natl. Acad. Sci. U.S.A.">
        <title>The genome sequence of the probiotic intestinal bacterium Lactobacillus johnsonii NCC 533.</title>
        <authorList>
            <person name="Pridmore R.D."/>
            <person name="Berger B."/>
            <person name="Desiere F."/>
            <person name="Vilanova D."/>
            <person name="Barretto C."/>
            <person name="Pittet A.-C."/>
            <person name="Zwahlen M.-C."/>
            <person name="Rouvet M."/>
            <person name="Altermann E."/>
            <person name="Barrangou R."/>
            <person name="Mollet B."/>
            <person name="Mercenier A."/>
            <person name="Klaenhammer T."/>
            <person name="Arigoni F."/>
            <person name="Schell M.A."/>
        </authorList>
    </citation>
    <scope>NUCLEOTIDE SEQUENCE [LARGE SCALE GENOMIC DNA]</scope>
    <source>
        <strain>CNCM I-1225 / La1 / NCC 533</strain>
    </source>
</reference>
<proteinExistence type="inferred from homology"/>
<feature type="chain" id="PRO_0000304838" description="UPF0473 protein LJ_0477">
    <location>
        <begin position="1"/>
        <end position="104"/>
    </location>
</feature>
<sequence>MSEKINANQDNDRQITLVDEQGNEELFEILFTFTSEDYGKSYVLLYPAAVSDDDDVEVQAFSYDADADGDVTSSDLHEITDDDEWNMVQGVLNTFLSDDRLSGE</sequence>